<proteinExistence type="inferred from homology"/>
<feature type="chain" id="PRO_1000198099" description="Thiamine kinase">
    <location>
        <begin position="1"/>
        <end position="274"/>
    </location>
</feature>
<comment type="function">
    <text evidence="1">Catalyzes the ATP-dependent phosphorylation of thiamine to thiamine phosphate. Is involved in thiamine salvage.</text>
</comment>
<comment type="catalytic activity">
    <reaction evidence="1">
        <text>thiamine + ATP = thiamine phosphate + ADP + H(+)</text>
        <dbReference type="Rhea" id="RHEA:12012"/>
        <dbReference type="ChEBI" id="CHEBI:15378"/>
        <dbReference type="ChEBI" id="CHEBI:18385"/>
        <dbReference type="ChEBI" id="CHEBI:30616"/>
        <dbReference type="ChEBI" id="CHEBI:37575"/>
        <dbReference type="ChEBI" id="CHEBI:456216"/>
        <dbReference type="EC" id="2.7.1.89"/>
    </reaction>
    <physiologicalReaction direction="left-to-right" evidence="1">
        <dbReference type="Rhea" id="RHEA:12013"/>
    </physiologicalReaction>
</comment>
<comment type="pathway">
    <text evidence="1">Cofactor biosynthesis; thiamine diphosphate biosynthesis; thiamine phosphate from thiamine: step 1/1.</text>
</comment>
<comment type="similarity">
    <text evidence="1">Belongs to the thiamine kinase family.</text>
</comment>
<accession>B4T340</accession>
<protein>
    <recommendedName>
        <fullName evidence="1">Thiamine kinase</fullName>
        <ecNumber evidence="1">2.7.1.89</ecNumber>
    </recommendedName>
</protein>
<gene>
    <name evidence="1" type="primary">thiK</name>
    <name type="ordered locus">SNSL254_A1307</name>
</gene>
<name>THIK_SALNS</name>
<sequence>MRSNNNNPLTRDEILSRYFPQYRPAVAASQGLSGGSCIIAHDTHRIVLRRHHDPDAPPAHFLRHHRALSQLPASLAPRALFYTPGWMAVEYLHGVVNSALPDADELAALLYHLHQQPRFGWRIALSPLLAQYWSCCDPARRTPFWLRRLKQLQKNGEPRPLRLAPLHMDVHGDNIVLTSAGLRLIDWEYAGDGDIALELAAVWVEDERQHRQLANAYAACARIDARQLWRQIRLWHPWVIMLKAGWFEYRWRQTGEQQFIRLADETWRQLRMKG</sequence>
<reference key="1">
    <citation type="journal article" date="2011" name="J. Bacteriol.">
        <title>Comparative genomics of 28 Salmonella enterica isolates: evidence for CRISPR-mediated adaptive sublineage evolution.</title>
        <authorList>
            <person name="Fricke W.F."/>
            <person name="Mammel M.K."/>
            <person name="McDermott P.F."/>
            <person name="Tartera C."/>
            <person name="White D.G."/>
            <person name="Leclerc J.E."/>
            <person name="Ravel J."/>
            <person name="Cebula T.A."/>
        </authorList>
    </citation>
    <scope>NUCLEOTIDE SEQUENCE [LARGE SCALE GENOMIC DNA]</scope>
    <source>
        <strain>SL254</strain>
    </source>
</reference>
<evidence type="ECO:0000255" key="1">
    <source>
        <dbReference type="HAMAP-Rule" id="MF_01604"/>
    </source>
</evidence>
<organism>
    <name type="scientific">Salmonella newport (strain SL254)</name>
    <dbReference type="NCBI Taxonomy" id="423368"/>
    <lineage>
        <taxon>Bacteria</taxon>
        <taxon>Pseudomonadati</taxon>
        <taxon>Pseudomonadota</taxon>
        <taxon>Gammaproteobacteria</taxon>
        <taxon>Enterobacterales</taxon>
        <taxon>Enterobacteriaceae</taxon>
        <taxon>Salmonella</taxon>
    </lineage>
</organism>
<dbReference type="EC" id="2.7.1.89" evidence="1"/>
<dbReference type="EMBL" id="CP001113">
    <property type="protein sequence ID" value="ACF62797.1"/>
    <property type="molecule type" value="Genomic_DNA"/>
</dbReference>
<dbReference type="RefSeq" id="WP_001257323.1">
    <property type="nucleotide sequence ID" value="NZ_CCMR01000003.1"/>
</dbReference>
<dbReference type="SMR" id="B4T340"/>
<dbReference type="KEGG" id="see:SNSL254_A1307"/>
<dbReference type="HOGENOM" id="CLU_055115_2_1_6"/>
<dbReference type="UniPathway" id="UPA00060">
    <property type="reaction ID" value="UER00596"/>
</dbReference>
<dbReference type="Proteomes" id="UP000008824">
    <property type="component" value="Chromosome"/>
</dbReference>
<dbReference type="GO" id="GO:0005524">
    <property type="term" value="F:ATP binding"/>
    <property type="evidence" value="ECO:0007669"/>
    <property type="project" value="UniProtKB-KW"/>
</dbReference>
<dbReference type="GO" id="GO:0019165">
    <property type="term" value="F:thiamine kinase activity"/>
    <property type="evidence" value="ECO:0007669"/>
    <property type="project" value="UniProtKB-UniRule"/>
</dbReference>
<dbReference type="GO" id="GO:0009229">
    <property type="term" value="P:thiamine diphosphate biosynthetic process"/>
    <property type="evidence" value="ECO:0007669"/>
    <property type="project" value="UniProtKB-UniRule"/>
</dbReference>
<dbReference type="GO" id="GO:0006772">
    <property type="term" value="P:thiamine metabolic process"/>
    <property type="evidence" value="ECO:0007669"/>
    <property type="project" value="InterPro"/>
</dbReference>
<dbReference type="Gene3D" id="3.90.1200.10">
    <property type="match status" value="1"/>
</dbReference>
<dbReference type="HAMAP" id="MF_01604">
    <property type="entry name" value="Thiamine_kinase"/>
    <property type="match status" value="1"/>
</dbReference>
<dbReference type="InterPro" id="IPR002575">
    <property type="entry name" value="Aminoglycoside_PTrfase"/>
</dbReference>
<dbReference type="InterPro" id="IPR011009">
    <property type="entry name" value="Kinase-like_dom_sf"/>
</dbReference>
<dbReference type="InterPro" id="IPR014093">
    <property type="entry name" value="Thiamine_kinase"/>
</dbReference>
<dbReference type="NCBIfam" id="NF007620">
    <property type="entry name" value="PRK10271.1"/>
    <property type="match status" value="1"/>
</dbReference>
<dbReference type="NCBIfam" id="TIGR02721">
    <property type="entry name" value="ycfN_thiK"/>
    <property type="match status" value="1"/>
</dbReference>
<dbReference type="Pfam" id="PF01636">
    <property type="entry name" value="APH"/>
    <property type="match status" value="1"/>
</dbReference>
<dbReference type="SUPFAM" id="SSF56112">
    <property type="entry name" value="Protein kinase-like (PK-like)"/>
    <property type="match status" value="1"/>
</dbReference>
<keyword id="KW-0067">ATP-binding</keyword>
<keyword id="KW-0418">Kinase</keyword>
<keyword id="KW-0547">Nucleotide-binding</keyword>
<keyword id="KW-0808">Transferase</keyword>